<gene>
    <name evidence="2" type="primary">purD</name>
    <name type="ordered locus">SAR1048</name>
</gene>
<accession>Q6GI10</accession>
<comment type="catalytic activity">
    <reaction evidence="2">
        <text>5-phospho-beta-D-ribosylamine + glycine + ATP = N(1)-(5-phospho-beta-D-ribosyl)glycinamide + ADP + phosphate + H(+)</text>
        <dbReference type="Rhea" id="RHEA:17453"/>
        <dbReference type="ChEBI" id="CHEBI:15378"/>
        <dbReference type="ChEBI" id="CHEBI:30616"/>
        <dbReference type="ChEBI" id="CHEBI:43474"/>
        <dbReference type="ChEBI" id="CHEBI:57305"/>
        <dbReference type="ChEBI" id="CHEBI:58681"/>
        <dbReference type="ChEBI" id="CHEBI:143788"/>
        <dbReference type="ChEBI" id="CHEBI:456216"/>
        <dbReference type="EC" id="6.3.4.13"/>
    </reaction>
</comment>
<comment type="cofactor">
    <cofactor evidence="1">
        <name>Mg(2+)</name>
        <dbReference type="ChEBI" id="CHEBI:18420"/>
    </cofactor>
    <cofactor evidence="1">
        <name>Mn(2+)</name>
        <dbReference type="ChEBI" id="CHEBI:29035"/>
    </cofactor>
    <text evidence="1">Binds 1 Mg(2+) or Mn(2+) ion per subunit.</text>
</comment>
<comment type="pathway">
    <text evidence="2">Purine metabolism; IMP biosynthesis via de novo pathway; N(1)-(5-phospho-D-ribosyl)glycinamide from 5-phospho-alpha-D-ribose 1-diphosphate: step 2/2.</text>
</comment>
<comment type="similarity">
    <text evidence="2">Belongs to the GARS family.</text>
</comment>
<proteinExistence type="inferred from homology"/>
<protein>
    <recommendedName>
        <fullName evidence="2">Phosphoribosylamine--glycine ligase</fullName>
        <ecNumber evidence="2">6.3.4.13</ecNumber>
    </recommendedName>
    <alternativeName>
        <fullName evidence="2">GARS</fullName>
    </alternativeName>
    <alternativeName>
        <fullName evidence="2">Glycinamide ribonucleotide synthetase</fullName>
    </alternativeName>
    <alternativeName>
        <fullName evidence="2">Phosphoribosylglycinamide synthetase</fullName>
    </alternativeName>
</protein>
<feature type="chain" id="PRO_0000151481" description="Phosphoribosylamine--glycine ligase">
    <location>
        <begin position="1"/>
        <end position="415"/>
    </location>
</feature>
<feature type="domain" description="ATP-grasp" evidence="2">
    <location>
        <begin position="108"/>
        <end position="311"/>
    </location>
</feature>
<feature type="binding site" evidence="2">
    <location>
        <begin position="134"/>
        <end position="191"/>
    </location>
    <ligand>
        <name>ATP</name>
        <dbReference type="ChEBI" id="CHEBI:30616"/>
    </ligand>
</feature>
<feature type="binding site" evidence="2">
    <location>
        <position position="281"/>
    </location>
    <ligand>
        <name>Mg(2+)</name>
        <dbReference type="ChEBI" id="CHEBI:18420"/>
    </ligand>
</feature>
<feature type="binding site" evidence="2">
    <location>
        <position position="283"/>
    </location>
    <ligand>
        <name>Mg(2+)</name>
        <dbReference type="ChEBI" id="CHEBI:18420"/>
    </ligand>
</feature>
<name>PUR2_STAAR</name>
<organism>
    <name type="scientific">Staphylococcus aureus (strain MRSA252)</name>
    <dbReference type="NCBI Taxonomy" id="282458"/>
    <lineage>
        <taxon>Bacteria</taxon>
        <taxon>Bacillati</taxon>
        <taxon>Bacillota</taxon>
        <taxon>Bacilli</taxon>
        <taxon>Bacillales</taxon>
        <taxon>Staphylococcaceae</taxon>
        <taxon>Staphylococcus</taxon>
    </lineage>
</organism>
<evidence type="ECO:0000250" key="1"/>
<evidence type="ECO:0000255" key="2">
    <source>
        <dbReference type="HAMAP-Rule" id="MF_00138"/>
    </source>
</evidence>
<keyword id="KW-0067">ATP-binding</keyword>
<keyword id="KW-0436">Ligase</keyword>
<keyword id="KW-0460">Magnesium</keyword>
<keyword id="KW-0464">Manganese</keyword>
<keyword id="KW-0479">Metal-binding</keyword>
<keyword id="KW-0547">Nucleotide-binding</keyword>
<keyword id="KW-0658">Purine biosynthesis</keyword>
<reference key="1">
    <citation type="journal article" date="2004" name="Proc. Natl. Acad. Sci. U.S.A.">
        <title>Complete genomes of two clinical Staphylococcus aureus strains: evidence for the rapid evolution of virulence and drug resistance.</title>
        <authorList>
            <person name="Holden M.T.G."/>
            <person name="Feil E.J."/>
            <person name="Lindsay J.A."/>
            <person name="Peacock S.J."/>
            <person name="Day N.P.J."/>
            <person name="Enright M.C."/>
            <person name="Foster T.J."/>
            <person name="Moore C.E."/>
            <person name="Hurst L."/>
            <person name="Atkin R."/>
            <person name="Barron A."/>
            <person name="Bason N."/>
            <person name="Bentley S.D."/>
            <person name="Chillingworth C."/>
            <person name="Chillingworth T."/>
            <person name="Churcher C."/>
            <person name="Clark L."/>
            <person name="Corton C."/>
            <person name="Cronin A."/>
            <person name="Doggett J."/>
            <person name="Dowd L."/>
            <person name="Feltwell T."/>
            <person name="Hance Z."/>
            <person name="Harris B."/>
            <person name="Hauser H."/>
            <person name="Holroyd S."/>
            <person name="Jagels K."/>
            <person name="James K.D."/>
            <person name="Lennard N."/>
            <person name="Line A."/>
            <person name="Mayes R."/>
            <person name="Moule S."/>
            <person name="Mungall K."/>
            <person name="Ormond D."/>
            <person name="Quail M.A."/>
            <person name="Rabbinowitsch E."/>
            <person name="Rutherford K.M."/>
            <person name="Sanders M."/>
            <person name="Sharp S."/>
            <person name="Simmonds M."/>
            <person name="Stevens K."/>
            <person name="Whitehead S."/>
            <person name="Barrell B.G."/>
            <person name="Spratt B.G."/>
            <person name="Parkhill J."/>
        </authorList>
    </citation>
    <scope>NUCLEOTIDE SEQUENCE [LARGE SCALE GENOMIC DNA]</scope>
    <source>
        <strain>MRSA252</strain>
    </source>
</reference>
<sequence>MNVLVIGAGGREHALAYKLNQSNLVKQVFVIPGNEAMTPIAEVHTEISESDHQGILDFAKQQNVDWVVIGPEQPLIDGLADILRANGFKVFGPNKQAAQIEGSKLFAKKIMEKYNIPTADYKEVERKKDALTYIENCEFPVVVKKDGLAAGKGVIIADTIEAARSAIEIMYGDEEEGTVVFETFLEGEEFSLMTFVNGELAVPFDCIAQDHKRAFDHDEGPNTGGMGAYCPVPHISDDVLKLTNETIAQPIAKAMLNEGYQFFGVLYIGAILTKDGPKVIEFNARFGDPEAQVLLSRMESDLMQHIIDLDEGKRTEFKWKNEAIVGVMLASKGYPDAYEKGHKVSGFDLNENYFVSGLKKQGDTFVTSGGRVILAIGKGDNVHDAQRDAYEKVSQIQSDHLFYRHDIANKALQLK</sequence>
<dbReference type="EC" id="6.3.4.13" evidence="2"/>
<dbReference type="EMBL" id="BX571856">
    <property type="protein sequence ID" value="CAG40051.1"/>
    <property type="molecule type" value="Genomic_DNA"/>
</dbReference>
<dbReference type="RefSeq" id="WP_001101912.1">
    <property type="nucleotide sequence ID" value="NC_002952.2"/>
</dbReference>
<dbReference type="SMR" id="Q6GI10"/>
<dbReference type="KEGG" id="sar:SAR1048"/>
<dbReference type="HOGENOM" id="CLU_027420_3_1_9"/>
<dbReference type="UniPathway" id="UPA00074">
    <property type="reaction ID" value="UER00125"/>
</dbReference>
<dbReference type="Proteomes" id="UP000000596">
    <property type="component" value="Chromosome"/>
</dbReference>
<dbReference type="GO" id="GO:0005524">
    <property type="term" value="F:ATP binding"/>
    <property type="evidence" value="ECO:0007669"/>
    <property type="project" value="UniProtKB-KW"/>
</dbReference>
<dbReference type="GO" id="GO:0046872">
    <property type="term" value="F:metal ion binding"/>
    <property type="evidence" value="ECO:0007669"/>
    <property type="project" value="UniProtKB-KW"/>
</dbReference>
<dbReference type="GO" id="GO:0004637">
    <property type="term" value="F:phosphoribosylamine-glycine ligase activity"/>
    <property type="evidence" value="ECO:0007669"/>
    <property type="project" value="UniProtKB-UniRule"/>
</dbReference>
<dbReference type="GO" id="GO:0006189">
    <property type="term" value="P:'de novo' IMP biosynthetic process"/>
    <property type="evidence" value="ECO:0007669"/>
    <property type="project" value="UniProtKB-UniRule"/>
</dbReference>
<dbReference type="GO" id="GO:0009113">
    <property type="term" value="P:purine nucleobase biosynthetic process"/>
    <property type="evidence" value="ECO:0007669"/>
    <property type="project" value="InterPro"/>
</dbReference>
<dbReference type="FunFam" id="3.40.50.20:FF:000006">
    <property type="entry name" value="Phosphoribosylamine--glycine ligase, chloroplastic"/>
    <property type="match status" value="1"/>
</dbReference>
<dbReference type="Gene3D" id="3.40.50.20">
    <property type="match status" value="1"/>
</dbReference>
<dbReference type="Gene3D" id="3.30.1490.20">
    <property type="entry name" value="ATP-grasp fold, A domain"/>
    <property type="match status" value="1"/>
</dbReference>
<dbReference type="Gene3D" id="3.30.470.20">
    <property type="entry name" value="ATP-grasp fold, B domain"/>
    <property type="match status" value="1"/>
</dbReference>
<dbReference type="Gene3D" id="3.90.600.10">
    <property type="entry name" value="Phosphoribosylglycinamide synthetase, C-terminal domain"/>
    <property type="match status" value="1"/>
</dbReference>
<dbReference type="HAMAP" id="MF_00138">
    <property type="entry name" value="GARS"/>
    <property type="match status" value="1"/>
</dbReference>
<dbReference type="InterPro" id="IPR011761">
    <property type="entry name" value="ATP-grasp"/>
</dbReference>
<dbReference type="InterPro" id="IPR013815">
    <property type="entry name" value="ATP_grasp_subdomain_1"/>
</dbReference>
<dbReference type="InterPro" id="IPR016185">
    <property type="entry name" value="PreATP-grasp_dom_sf"/>
</dbReference>
<dbReference type="InterPro" id="IPR020561">
    <property type="entry name" value="PRibGlycinamid_synth_ATP-grasp"/>
</dbReference>
<dbReference type="InterPro" id="IPR000115">
    <property type="entry name" value="PRibGlycinamide_synth"/>
</dbReference>
<dbReference type="InterPro" id="IPR020560">
    <property type="entry name" value="PRibGlycinamide_synth_C-dom"/>
</dbReference>
<dbReference type="InterPro" id="IPR037123">
    <property type="entry name" value="PRibGlycinamide_synth_C_sf"/>
</dbReference>
<dbReference type="InterPro" id="IPR020559">
    <property type="entry name" value="PRibGlycinamide_synth_CS"/>
</dbReference>
<dbReference type="InterPro" id="IPR020562">
    <property type="entry name" value="PRibGlycinamide_synth_N"/>
</dbReference>
<dbReference type="InterPro" id="IPR011054">
    <property type="entry name" value="Rudment_hybrid_motif"/>
</dbReference>
<dbReference type="NCBIfam" id="TIGR00877">
    <property type="entry name" value="purD"/>
    <property type="match status" value="1"/>
</dbReference>
<dbReference type="PANTHER" id="PTHR43472">
    <property type="entry name" value="PHOSPHORIBOSYLAMINE--GLYCINE LIGASE"/>
    <property type="match status" value="1"/>
</dbReference>
<dbReference type="PANTHER" id="PTHR43472:SF1">
    <property type="entry name" value="PHOSPHORIBOSYLAMINE--GLYCINE LIGASE, CHLOROPLASTIC"/>
    <property type="match status" value="1"/>
</dbReference>
<dbReference type="Pfam" id="PF01071">
    <property type="entry name" value="GARS_A"/>
    <property type="match status" value="1"/>
</dbReference>
<dbReference type="Pfam" id="PF02843">
    <property type="entry name" value="GARS_C"/>
    <property type="match status" value="1"/>
</dbReference>
<dbReference type="Pfam" id="PF02844">
    <property type="entry name" value="GARS_N"/>
    <property type="match status" value="1"/>
</dbReference>
<dbReference type="SMART" id="SM01209">
    <property type="entry name" value="GARS_A"/>
    <property type="match status" value="1"/>
</dbReference>
<dbReference type="SMART" id="SM01210">
    <property type="entry name" value="GARS_C"/>
    <property type="match status" value="1"/>
</dbReference>
<dbReference type="SUPFAM" id="SSF56059">
    <property type="entry name" value="Glutathione synthetase ATP-binding domain-like"/>
    <property type="match status" value="1"/>
</dbReference>
<dbReference type="SUPFAM" id="SSF52440">
    <property type="entry name" value="PreATP-grasp domain"/>
    <property type="match status" value="1"/>
</dbReference>
<dbReference type="SUPFAM" id="SSF51246">
    <property type="entry name" value="Rudiment single hybrid motif"/>
    <property type="match status" value="1"/>
</dbReference>
<dbReference type="PROSITE" id="PS50975">
    <property type="entry name" value="ATP_GRASP"/>
    <property type="match status" value="1"/>
</dbReference>
<dbReference type="PROSITE" id="PS00184">
    <property type="entry name" value="GARS"/>
    <property type="match status" value="1"/>
</dbReference>